<organism>
    <name type="scientific">Clostridium kluyveri (strain NBRC 12016)</name>
    <dbReference type="NCBI Taxonomy" id="583346"/>
    <lineage>
        <taxon>Bacteria</taxon>
        <taxon>Bacillati</taxon>
        <taxon>Bacillota</taxon>
        <taxon>Clostridia</taxon>
        <taxon>Eubacteriales</taxon>
        <taxon>Clostridiaceae</taxon>
        <taxon>Clostridium</taxon>
    </lineage>
</organism>
<protein>
    <recommendedName>
        <fullName evidence="1">Large ribosomal subunit protein uL23</fullName>
    </recommendedName>
    <alternativeName>
        <fullName evidence="2">50S ribosomal protein L23</fullName>
    </alternativeName>
</protein>
<gene>
    <name evidence="1" type="primary">rplW</name>
    <name type="ordered locus">CKR_0185</name>
</gene>
<name>RL23_CLOK1</name>
<comment type="function">
    <text evidence="1">One of the early assembly proteins it binds 23S rRNA. One of the proteins that surrounds the polypeptide exit tunnel on the outside of the ribosome. Forms the main docking site for trigger factor binding to the ribosome.</text>
</comment>
<comment type="subunit">
    <text evidence="1">Part of the 50S ribosomal subunit. Contacts protein L29, and trigger factor when it is bound to the ribosome.</text>
</comment>
<comment type="similarity">
    <text evidence="1">Belongs to the universal ribosomal protein uL23 family.</text>
</comment>
<feature type="chain" id="PRO_1000184079" description="Large ribosomal subunit protein uL23">
    <location>
        <begin position="1"/>
        <end position="98"/>
    </location>
</feature>
<keyword id="KW-0687">Ribonucleoprotein</keyword>
<keyword id="KW-0689">Ribosomal protein</keyword>
<keyword id="KW-0694">RNA-binding</keyword>
<keyword id="KW-0699">rRNA-binding</keyword>
<dbReference type="EMBL" id="AP009049">
    <property type="protein sequence ID" value="BAH05236.1"/>
    <property type="molecule type" value="Genomic_DNA"/>
</dbReference>
<dbReference type="RefSeq" id="WP_011988805.1">
    <property type="nucleotide sequence ID" value="NC_011837.1"/>
</dbReference>
<dbReference type="SMR" id="B9DYB1"/>
<dbReference type="KEGG" id="ckr:CKR_0185"/>
<dbReference type="HOGENOM" id="CLU_037562_3_2_9"/>
<dbReference type="Proteomes" id="UP000007969">
    <property type="component" value="Chromosome"/>
</dbReference>
<dbReference type="GO" id="GO:1990904">
    <property type="term" value="C:ribonucleoprotein complex"/>
    <property type="evidence" value="ECO:0007669"/>
    <property type="project" value="UniProtKB-KW"/>
</dbReference>
<dbReference type="GO" id="GO:0005840">
    <property type="term" value="C:ribosome"/>
    <property type="evidence" value="ECO:0007669"/>
    <property type="project" value="UniProtKB-KW"/>
</dbReference>
<dbReference type="GO" id="GO:0019843">
    <property type="term" value="F:rRNA binding"/>
    <property type="evidence" value="ECO:0007669"/>
    <property type="project" value="UniProtKB-UniRule"/>
</dbReference>
<dbReference type="GO" id="GO:0003735">
    <property type="term" value="F:structural constituent of ribosome"/>
    <property type="evidence" value="ECO:0007669"/>
    <property type="project" value="InterPro"/>
</dbReference>
<dbReference type="GO" id="GO:0006412">
    <property type="term" value="P:translation"/>
    <property type="evidence" value="ECO:0007669"/>
    <property type="project" value="UniProtKB-UniRule"/>
</dbReference>
<dbReference type="FunFam" id="3.30.70.330:FF:000001">
    <property type="entry name" value="50S ribosomal protein L23"/>
    <property type="match status" value="1"/>
</dbReference>
<dbReference type="Gene3D" id="3.30.70.330">
    <property type="match status" value="1"/>
</dbReference>
<dbReference type="HAMAP" id="MF_01369_B">
    <property type="entry name" value="Ribosomal_uL23_B"/>
    <property type="match status" value="1"/>
</dbReference>
<dbReference type="InterPro" id="IPR012677">
    <property type="entry name" value="Nucleotide-bd_a/b_plait_sf"/>
</dbReference>
<dbReference type="InterPro" id="IPR013025">
    <property type="entry name" value="Ribosomal_uL23-like"/>
</dbReference>
<dbReference type="InterPro" id="IPR012678">
    <property type="entry name" value="Ribosomal_uL23/eL15/eS24_sf"/>
</dbReference>
<dbReference type="InterPro" id="IPR001014">
    <property type="entry name" value="Ribosomal_uL23_CS"/>
</dbReference>
<dbReference type="NCBIfam" id="NF004363">
    <property type="entry name" value="PRK05738.2-4"/>
    <property type="match status" value="1"/>
</dbReference>
<dbReference type="PANTHER" id="PTHR11620">
    <property type="entry name" value="60S RIBOSOMAL PROTEIN L23A"/>
    <property type="match status" value="1"/>
</dbReference>
<dbReference type="Pfam" id="PF00276">
    <property type="entry name" value="Ribosomal_L23"/>
    <property type="match status" value="1"/>
</dbReference>
<dbReference type="SUPFAM" id="SSF54189">
    <property type="entry name" value="Ribosomal proteins S24e, L23 and L15e"/>
    <property type="match status" value="1"/>
</dbReference>
<dbReference type="PROSITE" id="PS00050">
    <property type="entry name" value="RIBOSOMAL_L23"/>
    <property type="match status" value="1"/>
</dbReference>
<evidence type="ECO:0000255" key="1">
    <source>
        <dbReference type="HAMAP-Rule" id="MF_01369"/>
    </source>
</evidence>
<evidence type="ECO:0000305" key="2"/>
<proteinExistence type="inferred from homology"/>
<reference key="1">
    <citation type="submission" date="2005-09" db="EMBL/GenBank/DDBJ databases">
        <title>Complete genome sequence of Clostridium kluyveri and comparative genomics of Clostridia species.</title>
        <authorList>
            <person name="Inui M."/>
            <person name="Nonaka H."/>
            <person name="Shinoda Y."/>
            <person name="Ikenaga Y."/>
            <person name="Abe M."/>
            <person name="Naito K."/>
            <person name="Vertes A.A."/>
            <person name="Yukawa H."/>
        </authorList>
    </citation>
    <scope>NUCLEOTIDE SEQUENCE [LARGE SCALE GENOMIC DNA]</scope>
    <source>
        <strain>NBRC 12016</strain>
    </source>
</reference>
<accession>B9DYB1</accession>
<sequence length="98" mass="11406">MKYTNYDIIRRPVITEKSMGAMNEKKYTFIVDIRANKSMIKRAIEDVFGVTVETVNTSRYKGKKKRVGVHIGKRPDYKKAIVKLTEESKTIEFFEGIQ</sequence>